<name>HUTG_STRP1</name>
<evidence type="ECO:0000255" key="1">
    <source>
        <dbReference type="HAMAP-Rule" id="MF_00737"/>
    </source>
</evidence>
<organism>
    <name type="scientific">Streptococcus pyogenes serotype M1</name>
    <dbReference type="NCBI Taxonomy" id="301447"/>
    <lineage>
        <taxon>Bacteria</taxon>
        <taxon>Bacillati</taxon>
        <taxon>Bacillota</taxon>
        <taxon>Bacilli</taxon>
        <taxon>Lactobacillales</taxon>
        <taxon>Streptococcaceae</taxon>
        <taxon>Streptococcus</taxon>
    </lineage>
</organism>
<proteinExistence type="inferred from homology"/>
<sequence length="328" mass="36326">MLEDYYPSTTSYYHGGIDDDLYTAKWGMVMTFLDLNDSSLTPFEGTHFALIGFKSDKGVYINNGRVGAVESPAAIRTQLAKFPWHLGNQVMVYDVGNIDGPNRSLEQLQNSLSKAIKRMCDLNLKPIVLGGGHETAYGHYLGLRQSLSPSDDLAVINMDAHFDLRPYDQTGPNSGTGFRQMFDDAVADKRLFKYFVLGIQEHNNNLFLFDFVAKSKGIQFLTGQDIYQMGHQKVCRAIDRFLEGQERVYLTIDMDCFSVGAAPGVSAIQSLGVDPNLAVLVLQHIAASGKLVGFDVVEVSPPHDIDNHTANLAATFIFYLVQIMAQHS</sequence>
<accession>Q99XQ9</accession>
<accession>Q48W79</accession>
<gene>
    <name evidence="1" type="primary">hutG</name>
    <name type="ordered locus">SPy_2090</name>
    <name type="ordered locus">M5005_Spy1778</name>
</gene>
<feature type="chain" id="PRO_0000173775" description="Formimidoylglutamase">
    <location>
        <begin position="1"/>
        <end position="328"/>
    </location>
</feature>
<feature type="binding site" evidence="1">
    <location>
        <position position="133"/>
    </location>
    <ligand>
        <name>Mn(2+)</name>
        <dbReference type="ChEBI" id="CHEBI:29035"/>
        <label>1</label>
    </ligand>
</feature>
<feature type="binding site" evidence="1">
    <location>
        <position position="159"/>
    </location>
    <ligand>
        <name>Mn(2+)</name>
        <dbReference type="ChEBI" id="CHEBI:29035"/>
        <label>1</label>
    </ligand>
</feature>
<feature type="binding site" evidence="1">
    <location>
        <position position="159"/>
    </location>
    <ligand>
        <name>Mn(2+)</name>
        <dbReference type="ChEBI" id="CHEBI:29035"/>
        <label>2</label>
    </ligand>
</feature>
<feature type="binding site" evidence="1">
    <location>
        <position position="161"/>
    </location>
    <ligand>
        <name>Mn(2+)</name>
        <dbReference type="ChEBI" id="CHEBI:29035"/>
        <label>2</label>
    </ligand>
</feature>
<feature type="binding site" evidence="1">
    <location>
        <position position="163"/>
    </location>
    <ligand>
        <name>Mn(2+)</name>
        <dbReference type="ChEBI" id="CHEBI:29035"/>
        <label>1</label>
    </ligand>
</feature>
<feature type="binding site" evidence="1">
    <location>
        <position position="253"/>
    </location>
    <ligand>
        <name>Mn(2+)</name>
        <dbReference type="ChEBI" id="CHEBI:29035"/>
        <label>1</label>
    </ligand>
</feature>
<feature type="binding site" evidence="1">
    <location>
        <position position="253"/>
    </location>
    <ligand>
        <name>Mn(2+)</name>
        <dbReference type="ChEBI" id="CHEBI:29035"/>
        <label>2</label>
    </ligand>
</feature>
<feature type="binding site" evidence="1">
    <location>
        <position position="255"/>
    </location>
    <ligand>
        <name>Mn(2+)</name>
        <dbReference type="ChEBI" id="CHEBI:29035"/>
        <label>2</label>
    </ligand>
</feature>
<comment type="function">
    <text evidence="1">Catalyzes the conversion of N-formimidoyl-L-glutamate to L-glutamate and formamide.</text>
</comment>
<comment type="catalytic activity">
    <reaction evidence="1">
        <text>N-formimidoyl-L-glutamate + H2O = formamide + L-glutamate</text>
        <dbReference type="Rhea" id="RHEA:22492"/>
        <dbReference type="ChEBI" id="CHEBI:15377"/>
        <dbReference type="ChEBI" id="CHEBI:16397"/>
        <dbReference type="ChEBI" id="CHEBI:29985"/>
        <dbReference type="ChEBI" id="CHEBI:58928"/>
        <dbReference type="EC" id="3.5.3.8"/>
    </reaction>
</comment>
<comment type="cofactor">
    <cofactor evidence="1">
        <name>Mn(2+)</name>
        <dbReference type="ChEBI" id="CHEBI:29035"/>
    </cofactor>
    <text evidence="1">Binds 2 manganese ions per subunit.</text>
</comment>
<comment type="pathway">
    <text evidence="1">Amino-acid degradation; L-histidine degradation into L-glutamate; L-glutamate from N-formimidoyl-L-glutamate (hydrolase route): step 1/1.</text>
</comment>
<comment type="similarity">
    <text evidence="1">Belongs to the arginase family.</text>
</comment>
<dbReference type="EC" id="3.5.3.8" evidence="1"/>
<dbReference type="EMBL" id="AE004092">
    <property type="protein sequence ID" value="AAK34742.1"/>
    <property type="molecule type" value="Genomic_DNA"/>
</dbReference>
<dbReference type="EMBL" id="CP000017">
    <property type="protein sequence ID" value="AAZ52396.1"/>
    <property type="molecule type" value="Genomic_DNA"/>
</dbReference>
<dbReference type="RefSeq" id="NP_270021.1">
    <property type="nucleotide sequence ID" value="NC_002737.2"/>
</dbReference>
<dbReference type="SMR" id="Q99XQ9"/>
<dbReference type="PaxDb" id="1314-HKU360_01891"/>
<dbReference type="KEGG" id="spy:SPy_2090"/>
<dbReference type="KEGG" id="spz:M5005_Spy1778"/>
<dbReference type="PATRIC" id="fig|160490.10.peg.1811"/>
<dbReference type="HOGENOM" id="CLU_039478_2_0_9"/>
<dbReference type="OMA" id="WPFHYAC"/>
<dbReference type="UniPathway" id="UPA00379">
    <property type="reaction ID" value="UER00552"/>
</dbReference>
<dbReference type="Proteomes" id="UP000000750">
    <property type="component" value="Chromosome"/>
</dbReference>
<dbReference type="GO" id="GO:0008783">
    <property type="term" value="F:agmatinase activity"/>
    <property type="evidence" value="ECO:0007669"/>
    <property type="project" value="TreeGrafter"/>
</dbReference>
<dbReference type="GO" id="GO:0050415">
    <property type="term" value="F:formimidoylglutamase activity"/>
    <property type="evidence" value="ECO:0007669"/>
    <property type="project" value="UniProtKB-UniRule"/>
</dbReference>
<dbReference type="GO" id="GO:0030145">
    <property type="term" value="F:manganese ion binding"/>
    <property type="evidence" value="ECO:0007669"/>
    <property type="project" value="UniProtKB-UniRule"/>
</dbReference>
<dbReference type="GO" id="GO:0019556">
    <property type="term" value="P:L-histidine catabolic process to glutamate and formamide"/>
    <property type="evidence" value="ECO:0007669"/>
    <property type="project" value="UniProtKB-UniPathway"/>
</dbReference>
<dbReference type="GO" id="GO:0019557">
    <property type="term" value="P:L-histidine catabolic process to glutamate and formate"/>
    <property type="evidence" value="ECO:0007669"/>
    <property type="project" value="UniProtKB-UniPathway"/>
</dbReference>
<dbReference type="GO" id="GO:0033389">
    <property type="term" value="P:putrescine biosynthetic process from arginine, via agmatine"/>
    <property type="evidence" value="ECO:0007669"/>
    <property type="project" value="TreeGrafter"/>
</dbReference>
<dbReference type="CDD" id="cd09988">
    <property type="entry name" value="Formimidoylglutamase"/>
    <property type="match status" value="1"/>
</dbReference>
<dbReference type="Gene3D" id="3.40.800.10">
    <property type="entry name" value="Ureohydrolase domain"/>
    <property type="match status" value="1"/>
</dbReference>
<dbReference type="HAMAP" id="MF_00737">
    <property type="entry name" value="Formimidoylglutam"/>
    <property type="match status" value="1"/>
</dbReference>
<dbReference type="InterPro" id="IPR005923">
    <property type="entry name" value="HutG"/>
</dbReference>
<dbReference type="InterPro" id="IPR006035">
    <property type="entry name" value="Ureohydrolase"/>
</dbReference>
<dbReference type="InterPro" id="IPR023696">
    <property type="entry name" value="Ureohydrolase_dom_sf"/>
</dbReference>
<dbReference type="NCBIfam" id="NF010347">
    <property type="entry name" value="PRK13775.1"/>
    <property type="match status" value="1"/>
</dbReference>
<dbReference type="PANTHER" id="PTHR11358">
    <property type="entry name" value="ARGINASE/AGMATINASE"/>
    <property type="match status" value="1"/>
</dbReference>
<dbReference type="PANTHER" id="PTHR11358:SF35">
    <property type="entry name" value="FORMIMIDOYLGLUTAMASE"/>
    <property type="match status" value="1"/>
</dbReference>
<dbReference type="Pfam" id="PF00491">
    <property type="entry name" value="Arginase"/>
    <property type="match status" value="1"/>
</dbReference>
<dbReference type="PIRSF" id="PIRSF036979">
    <property type="entry name" value="Arginase"/>
    <property type="match status" value="1"/>
</dbReference>
<dbReference type="PRINTS" id="PR00116">
    <property type="entry name" value="ARGINASE"/>
</dbReference>
<dbReference type="SUPFAM" id="SSF52768">
    <property type="entry name" value="Arginase/deacetylase"/>
    <property type="match status" value="1"/>
</dbReference>
<dbReference type="PROSITE" id="PS51409">
    <property type="entry name" value="ARGINASE_2"/>
    <property type="match status" value="1"/>
</dbReference>
<protein>
    <recommendedName>
        <fullName evidence="1">Formimidoylglutamase</fullName>
        <ecNumber evidence="1">3.5.3.8</ecNumber>
    </recommendedName>
    <alternativeName>
        <fullName evidence="1">Formiminoglutamase</fullName>
    </alternativeName>
    <alternativeName>
        <fullName evidence="1">Formiminoglutamate hydrolase</fullName>
    </alternativeName>
</protein>
<keyword id="KW-0369">Histidine metabolism</keyword>
<keyword id="KW-0378">Hydrolase</keyword>
<keyword id="KW-0464">Manganese</keyword>
<keyword id="KW-0479">Metal-binding</keyword>
<keyword id="KW-1185">Reference proteome</keyword>
<reference key="1">
    <citation type="journal article" date="2001" name="Proc. Natl. Acad. Sci. U.S.A.">
        <title>Complete genome sequence of an M1 strain of Streptococcus pyogenes.</title>
        <authorList>
            <person name="Ferretti J.J."/>
            <person name="McShan W.M."/>
            <person name="Ajdic D.J."/>
            <person name="Savic D.J."/>
            <person name="Savic G."/>
            <person name="Lyon K."/>
            <person name="Primeaux C."/>
            <person name="Sezate S."/>
            <person name="Suvorov A.N."/>
            <person name="Kenton S."/>
            <person name="Lai H.S."/>
            <person name="Lin S.P."/>
            <person name="Qian Y."/>
            <person name="Jia H.G."/>
            <person name="Najar F.Z."/>
            <person name="Ren Q."/>
            <person name="Zhu H."/>
            <person name="Song L."/>
            <person name="White J."/>
            <person name="Yuan X."/>
            <person name="Clifton S.W."/>
            <person name="Roe B.A."/>
            <person name="McLaughlin R.E."/>
        </authorList>
    </citation>
    <scope>NUCLEOTIDE SEQUENCE [LARGE SCALE GENOMIC DNA]</scope>
    <source>
        <strain>ATCC 700294 / SF370 / Serotype M1</strain>
    </source>
</reference>
<reference key="2">
    <citation type="journal article" date="2005" name="J. Infect. Dis.">
        <title>Evolutionary origin and emergence of a highly successful clone of serotype M1 group A Streptococcus involved multiple horizontal gene transfer events.</title>
        <authorList>
            <person name="Sumby P."/>
            <person name="Porcella S.F."/>
            <person name="Madrigal A.G."/>
            <person name="Barbian K.D."/>
            <person name="Virtaneva K."/>
            <person name="Ricklefs S.M."/>
            <person name="Sturdevant D.E."/>
            <person name="Graham M.R."/>
            <person name="Vuopio-Varkila J."/>
            <person name="Hoe N.P."/>
            <person name="Musser J.M."/>
        </authorList>
    </citation>
    <scope>NUCLEOTIDE SEQUENCE [LARGE SCALE GENOMIC DNA]</scope>
    <source>
        <strain>ATCC BAA-947 / MGAS5005 / Serotype M1</strain>
    </source>
</reference>